<feature type="chain" id="PRO_0000243741" description="Large ribosomal subunit protein bL20">
    <location>
        <begin position="1"/>
        <end position="119"/>
    </location>
</feature>
<gene>
    <name evidence="1" type="primary">rplT</name>
    <name type="ordered locus">SAK_1415</name>
</gene>
<dbReference type="EMBL" id="CP000114">
    <property type="protein sequence ID" value="ABA45775.1"/>
    <property type="molecule type" value="Genomic_DNA"/>
</dbReference>
<dbReference type="RefSeq" id="WP_000124839.1">
    <property type="nucleotide sequence ID" value="NC_007432.1"/>
</dbReference>
<dbReference type="SMR" id="Q3K0D0"/>
<dbReference type="GeneID" id="98392912"/>
<dbReference type="KEGG" id="sak:SAK_1415"/>
<dbReference type="HOGENOM" id="CLU_123265_0_1_9"/>
<dbReference type="GO" id="GO:1990904">
    <property type="term" value="C:ribonucleoprotein complex"/>
    <property type="evidence" value="ECO:0007669"/>
    <property type="project" value="UniProtKB-KW"/>
</dbReference>
<dbReference type="GO" id="GO:0005840">
    <property type="term" value="C:ribosome"/>
    <property type="evidence" value="ECO:0007669"/>
    <property type="project" value="UniProtKB-KW"/>
</dbReference>
<dbReference type="GO" id="GO:0019843">
    <property type="term" value="F:rRNA binding"/>
    <property type="evidence" value="ECO:0007669"/>
    <property type="project" value="UniProtKB-UniRule"/>
</dbReference>
<dbReference type="GO" id="GO:0003735">
    <property type="term" value="F:structural constituent of ribosome"/>
    <property type="evidence" value="ECO:0007669"/>
    <property type="project" value="InterPro"/>
</dbReference>
<dbReference type="GO" id="GO:0000027">
    <property type="term" value="P:ribosomal large subunit assembly"/>
    <property type="evidence" value="ECO:0007669"/>
    <property type="project" value="UniProtKB-UniRule"/>
</dbReference>
<dbReference type="GO" id="GO:0006412">
    <property type="term" value="P:translation"/>
    <property type="evidence" value="ECO:0007669"/>
    <property type="project" value="InterPro"/>
</dbReference>
<dbReference type="CDD" id="cd07026">
    <property type="entry name" value="Ribosomal_L20"/>
    <property type="match status" value="1"/>
</dbReference>
<dbReference type="FunFam" id="1.10.1900.20:FF:000001">
    <property type="entry name" value="50S ribosomal protein L20"/>
    <property type="match status" value="1"/>
</dbReference>
<dbReference type="Gene3D" id="6.10.160.10">
    <property type="match status" value="1"/>
</dbReference>
<dbReference type="Gene3D" id="1.10.1900.20">
    <property type="entry name" value="Ribosomal protein L20"/>
    <property type="match status" value="1"/>
</dbReference>
<dbReference type="HAMAP" id="MF_00382">
    <property type="entry name" value="Ribosomal_bL20"/>
    <property type="match status" value="1"/>
</dbReference>
<dbReference type="InterPro" id="IPR005813">
    <property type="entry name" value="Ribosomal_bL20"/>
</dbReference>
<dbReference type="InterPro" id="IPR049946">
    <property type="entry name" value="RIBOSOMAL_L20_CS"/>
</dbReference>
<dbReference type="InterPro" id="IPR035566">
    <property type="entry name" value="Ribosomal_protein_bL20_C"/>
</dbReference>
<dbReference type="NCBIfam" id="TIGR01032">
    <property type="entry name" value="rplT_bact"/>
    <property type="match status" value="1"/>
</dbReference>
<dbReference type="PANTHER" id="PTHR10986">
    <property type="entry name" value="39S RIBOSOMAL PROTEIN L20"/>
    <property type="match status" value="1"/>
</dbReference>
<dbReference type="Pfam" id="PF00453">
    <property type="entry name" value="Ribosomal_L20"/>
    <property type="match status" value="1"/>
</dbReference>
<dbReference type="PRINTS" id="PR00062">
    <property type="entry name" value="RIBOSOMALL20"/>
</dbReference>
<dbReference type="SUPFAM" id="SSF74731">
    <property type="entry name" value="Ribosomal protein L20"/>
    <property type="match status" value="1"/>
</dbReference>
<dbReference type="PROSITE" id="PS00937">
    <property type="entry name" value="RIBOSOMAL_L20"/>
    <property type="match status" value="1"/>
</dbReference>
<reference key="1">
    <citation type="journal article" date="2005" name="Proc. Natl. Acad. Sci. U.S.A.">
        <title>Genome analysis of multiple pathogenic isolates of Streptococcus agalactiae: implications for the microbial 'pan-genome'.</title>
        <authorList>
            <person name="Tettelin H."/>
            <person name="Masignani V."/>
            <person name="Cieslewicz M.J."/>
            <person name="Donati C."/>
            <person name="Medini D."/>
            <person name="Ward N.L."/>
            <person name="Angiuoli S.V."/>
            <person name="Crabtree J."/>
            <person name="Jones A.L."/>
            <person name="Durkin A.S."/>
            <person name="DeBoy R.T."/>
            <person name="Davidsen T.M."/>
            <person name="Mora M."/>
            <person name="Scarselli M."/>
            <person name="Margarit y Ros I."/>
            <person name="Peterson J.D."/>
            <person name="Hauser C.R."/>
            <person name="Sundaram J.P."/>
            <person name="Nelson W.C."/>
            <person name="Madupu R."/>
            <person name="Brinkac L.M."/>
            <person name="Dodson R.J."/>
            <person name="Rosovitz M.J."/>
            <person name="Sullivan S.A."/>
            <person name="Daugherty S.C."/>
            <person name="Haft D.H."/>
            <person name="Selengut J."/>
            <person name="Gwinn M.L."/>
            <person name="Zhou L."/>
            <person name="Zafar N."/>
            <person name="Khouri H."/>
            <person name="Radune D."/>
            <person name="Dimitrov G."/>
            <person name="Watkins K."/>
            <person name="O'Connor K.J."/>
            <person name="Smith S."/>
            <person name="Utterback T.R."/>
            <person name="White O."/>
            <person name="Rubens C.E."/>
            <person name="Grandi G."/>
            <person name="Madoff L.C."/>
            <person name="Kasper D.L."/>
            <person name="Telford J.L."/>
            <person name="Wessels M.R."/>
            <person name="Rappuoli R."/>
            <person name="Fraser C.M."/>
        </authorList>
    </citation>
    <scope>NUCLEOTIDE SEQUENCE [LARGE SCALE GENOMIC DNA]</scope>
    <source>
        <strain>ATCC 27591 / A909 / CDC SS700</strain>
    </source>
</reference>
<name>RL20_STRA1</name>
<comment type="function">
    <text evidence="1">Binds directly to 23S ribosomal RNA and is necessary for the in vitro assembly process of the 50S ribosomal subunit. It is not involved in the protein synthesizing functions of that subunit.</text>
</comment>
<comment type="similarity">
    <text evidence="1">Belongs to the bacterial ribosomal protein bL20 family.</text>
</comment>
<protein>
    <recommendedName>
        <fullName evidence="1">Large ribosomal subunit protein bL20</fullName>
    </recommendedName>
    <alternativeName>
        <fullName evidence="2">50S ribosomal protein L20</fullName>
    </alternativeName>
</protein>
<organism>
    <name type="scientific">Streptococcus agalactiae serotype Ia (strain ATCC 27591 / A909 / CDC SS700)</name>
    <dbReference type="NCBI Taxonomy" id="205921"/>
    <lineage>
        <taxon>Bacteria</taxon>
        <taxon>Bacillati</taxon>
        <taxon>Bacillota</taxon>
        <taxon>Bacilli</taxon>
        <taxon>Lactobacillales</taxon>
        <taxon>Streptococcaceae</taxon>
        <taxon>Streptococcus</taxon>
    </lineage>
</organism>
<sequence length="119" mass="13651">MARVKGGVVSRKRRKRVLKLAKGYYGAKHILFRTAKEQVMNSYYYAYRDRRQKKRDFRKLWITRINAAARMNGLSYSQLMHGLKLAEIEVNRKMLADLAVNDAAAFTALADAAKAKLGK</sequence>
<keyword id="KW-0687">Ribonucleoprotein</keyword>
<keyword id="KW-0689">Ribosomal protein</keyword>
<keyword id="KW-0694">RNA-binding</keyword>
<keyword id="KW-0699">rRNA-binding</keyword>
<proteinExistence type="inferred from homology"/>
<accession>Q3K0D0</accession>
<evidence type="ECO:0000255" key="1">
    <source>
        <dbReference type="HAMAP-Rule" id="MF_00382"/>
    </source>
</evidence>
<evidence type="ECO:0000305" key="2"/>